<sequence>MQHATDLISIIALGLVCAFIGGMLAQRMRLPPLVGYLVAGIAIGPFTPGFVGDPALASQLAELGVILLMFGVGLHFSIGDLLAVRTIALPGAIVQITVATAMGAGLAWGFGWGAGAGLVFGLALSVASTVVLLRALEGQGLLDSDKGRIAVGWLIVEDLAMVVALVLLPALAPSLGGEAMQAAGHHGPPEHGLWVTLGLTLAKVGVFVAVMLVGGRRLIPYLLGLAARTGSRELFTLAVLASAVGIAFASSELFGVSFALGAFFAGMVLAESDLSH</sequence>
<feature type="chain" id="PRO_0000196617" description="Uncharacterized protein in phaC 3'region">
    <location>
        <begin position="1"/>
        <end position="276" status="greater than"/>
    </location>
</feature>
<feature type="transmembrane region" description="Helical" evidence="1">
    <location>
        <begin position="5"/>
        <end position="25"/>
    </location>
</feature>
<feature type="transmembrane region" description="Helical" evidence="1">
    <location>
        <begin position="32"/>
        <end position="52"/>
    </location>
</feature>
<feature type="transmembrane region" description="Helical" evidence="1">
    <location>
        <begin position="64"/>
        <end position="84"/>
    </location>
</feature>
<feature type="transmembrane region" description="Helical" evidence="1">
    <location>
        <begin position="104"/>
        <end position="124"/>
    </location>
</feature>
<feature type="transmembrane region" description="Helical" evidence="1">
    <location>
        <begin position="149"/>
        <end position="169"/>
    </location>
</feature>
<feature type="transmembrane region" description="Helical" evidence="1">
    <location>
        <begin position="193"/>
        <end position="213"/>
    </location>
</feature>
<feature type="transmembrane region" description="Helical" evidence="1">
    <location>
        <begin position="244"/>
        <end position="264"/>
    </location>
</feature>
<feature type="non-terminal residue">
    <location>
        <position position="276"/>
    </location>
</feature>
<dbReference type="EMBL" id="L07893">
    <property type="protein sequence ID" value="AAA72331.1"/>
    <property type="molecule type" value="Genomic_DNA"/>
</dbReference>
<dbReference type="SMR" id="P52071"/>
<dbReference type="GO" id="GO:0005886">
    <property type="term" value="C:plasma membrane"/>
    <property type="evidence" value="ECO:0007669"/>
    <property type="project" value="UniProtKB-SubCell"/>
</dbReference>
<dbReference type="GO" id="GO:0015297">
    <property type="term" value="F:antiporter activity"/>
    <property type="evidence" value="ECO:0007669"/>
    <property type="project" value="InterPro"/>
</dbReference>
<dbReference type="GO" id="GO:1902600">
    <property type="term" value="P:proton transmembrane transport"/>
    <property type="evidence" value="ECO:0007669"/>
    <property type="project" value="InterPro"/>
</dbReference>
<dbReference type="Gene3D" id="1.20.1530.20">
    <property type="match status" value="1"/>
</dbReference>
<dbReference type="InterPro" id="IPR006153">
    <property type="entry name" value="Cation/H_exchanger_TM"/>
</dbReference>
<dbReference type="InterPro" id="IPR038770">
    <property type="entry name" value="Na+/solute_symporter_sf"/>
</dbReference>
<dbReference type="PANTHER" id="PTHR42751:SF1">
    <property type="entry name" value="CATION_PROTON ANTIPORTER YBAL-RELATED"/>
    <property type="match status" value="1"/>
</dbReference>
<dbReference type="PANTHER" id="PTHR42751">
    <property type="entry name" value="SODIUM/HYDROGEN EXCHANGER FAMILY/TRKA DOMAIN PROTEIN"/>
    <property type="match status" value="1"/>
</dbReference>
<dbReference type="Pfam" id="PF00999">
    <property type="entry name" value="Na_H_Exchanger"/>
    <property type="match status" value="1"/>
</dbReference>
<proteinExistence type="inferred from homology"/>
<protein>
    <recommendedName>
        <fullName>Uncharacterized protein in phaC 3'region</fullName>
    </recommendedName>
    <alternativeName>
        <fullName>ORF1</fullName>
    </alternativeName>
</protein>
<keyword id="KW-1003">Cell membrane</keyword>
<keyword id="KW-0472">Membrane</keyword>
<keyword id="KW-0812">Transmembrane</keyword>
<keyword id="KW-1133">Transmembrane helix</keyword>
<keyword id="KW-0813">Transport</keyword>
<organism>
    <name type="scientific">Methylorubrum extorquens</name>
    <name type="common">Methylobacterium dichloromethanicum</name>
    <name type="synonym">Methylobacterium extorquens</name>
    <dbReference type="NCBI Taxonomy" id="408"/>
    <lineage>
        <taxon>Bacteria</taxon>
        <taxon>Pseudomonadati</taxon>
        <taxon>Pseudomonadota</taxon>
        <taxon>Alphaproteobacteria</taxon>
        <taxon>Hyphomicrobiales</taxon>
        <taxon>Methylobacteriaceae</taxon>
        <taxon>Methylorubrum</taxon>
    </lineage>
</organism>
<evidence type="ECO:0000255" key="1"/>
<evidence type="ECO:0000305" key="2"/>
<comment type="subcellular location">
    <subcellularLocation>
        <location evidence="2">Cell membrane</location>
        <topology evidence="2">Multi-pass membrane protein</topology>
    </subcellularLocation>
</comment>
<comment type="similarity">
    <text evidence="2">Belongs to the monovalent cation:proton antiporter 2 (CPA2) transporter (TC 2.A.37) family.</text>
</comment>
<name>YPH1_METEX</name>
<reference key="1">
    <citation type="journal article" date="1993" name="Appl. Microbiol. Biotechnol.">
        <title>Cloning and characterization of the Methylobacterium extorquens polyhydroxyalkanoic-acid-synthase structural gene.</title>
        <authorList>
            <person name="Valentin H.E."/>
            <person name="Steinbuechel A."/>
        </authorList>
    </citation>
    <scope>NUCLEOTIDE SEQUENCE [GENOMIC DNA]</scope>
    <source>
        <strain>IBT 6</strain>
    </source>
</reference>
<accession>P52071</accession>